<gene>
    <name evidence="1" type="primary">rplP</name>
    <name type="ordered locus">LBUL_0357</name>
</gene>
<comment type="function">
    <text evidence="1">Binds 23S rRNA and is also seen to make contacts with the A and possibly P site tRNAs.</text>
</comment>
<comment type="subunit">
    <text evidence="1">Part of the 50S ribosomal subunit.</text>
</comment>
<comment type="similarity">
    <text evidence="1">Belongs to the universal ribosomal protein uL16 family.</text>
</comment>
<reference key="1">
    <citation type="journal article" date="2006" name="Proc. Natl. Acad. Sci. U.S.A.">
        <title>Comparative genomics of the lactic acid bacteria.</title>
        <authorList>
            <person name="Makarova K.S."/>
            <person name="Slesarev A."/>
            <person name="Wolf Y.I."/>
            <person name="Sorokin A."/>
            <person name="Mirkin B."/>
            <person name="Koonin E.V."/>
            <person name="Pavlov A."/>
            <person name="Pavlova N."/>
            <person name="Karamychev V."/>
            <person name="Polouchine N."/>
            <person name="Shakhova V."/>
            <person name="Grigoriev I."/>
            <person name="Lou Y."/>
            <person name="Rohksar D."/>
            <person name="Lucas S."/>
            <person name="Huang K."/>
            <person name="Goodstein D.M."/>
            <person name="Hawkins T."/>
            <person name="Plengvidhya V."/>
            <person name="Welker D."/>
            <person name="Hughes J."/>
            <person name="Goh Y."/>
            <person name="Benson A."/>
            <person name="Baldwin K."/>
            <person name="Lee J.-H."/>
            <person name="Diaz-Muniz I."/>
            <person name="Dosti B."/>
            <person name="Smeianov V."/>
            <person name="Wechter W."/>
            <person name="Barabote R."/>
            <person name="Lorca G."/>
            <person name="Altermann E."/>
            <person name="Barrangou R."/>
            <person name="Ganesan B."/>
            <person name="Xie Y."/>
            <person name="Rawsthorne H."/>
            <person name="Tamir D."/>
            <person name="Parker C."/>
            <person name="Breidt F."/>
            <person name="Broadbent J.R."/>
            <person name="Hutkins R."/>
            <person name="O'Sullivan D."/>
            <person name="Steele J."/>
            <person name="Unlu G."/>
            <person name="Saier M.H. Jr."/>
            <person name="Klaenhammer T."/>
            <person name="Richardson P."/>
            <person name="Kozyavkin S."/>
            <person name="Weimer B.C."/>
            <person name="Mills D.A."/>
        </authorList>
    </citation>
    <scope>NUCLEOTIDE SEQUENCE [LARGE SCALE GENOMIC DNA]</scope>
    <source>
        <strain>ATCC BAA-365 / Lb-18</strain>
    </source>
</reference>
<organism>
    <name type="scientific">Lactobacillus delbrueckii subsp. bulgaricus (strain ATCC BAA-365 / Lb-18)</name>
    <dbReference type="NCBI Taxonomy" id="321956"/>
    <lineage>
        <taxon>Bacteria</taxon>
        <taxon>Bacillati</taxon>
        <taxon>Bacillota</taxon>
        <taxon>Bacilli</taxon>
        <taxon>Lactobacillales</taxon>
        <taxon>Lactobacillaceae</taxon>
        <taxon>Lactobacillus</taxon>
    </lineage>
</organism>
<feature type="chain" id="PRO_1000054640" description="Large ribosomal subunit protein uL16">
    <location>
        <begin position="1"/>
        <end position="147"/>
    </location>
</feature>
<accession>Q04C08</accession>
<keyword id="KW-0687">Ribonucleoprotein</keyword>
<keyword id="KW-0689">Ribosomal protein</keyword>
<keyword id="KW-0694">RNA-binding</keyword>
<keyword id="KW-0699">rRNA-binding</keyword>
<keyword id="KW-0820">tRNA-binding</keyword>
<protein>
    <recommendedName>
        <fullName evidence="1">Large ribosomal subunit protein uL16</fullName>
    </recommendedName>
    <alternativeName>
        <fullName evidence="2">50S ribosomal protein L16</fullName>
    </alternativeName>
</protein>
<evidence type="ECO:0000255" key="1">
    <source>
        <dbReference type="HAMAP-Rule" id="MF_01342"/>
    </source>
</evidence>
<evidence type="ECO:0000305" key="2"/>
<proteinExistence type="inferred from homology"/>
<dbReference type="EMBL" id="CP000412">
    <property type="protein sequence ID" value="ABJ58014.1"/>
    <property type="molecule type" value="Genomic_DNA"/>
</dbReference>
<dbReference type="RefSeq" id="WP_002878205.1">
    <property type="nucleotide sequence ID" value="NC_008529.1"/>
</dbReference>
<dbReference type="SMR" id="Q04C08"/>
<dbReference type="GeneID" id="69668433"/>
<dbReference type="KEGG" id="lbu:LBUL_0357"/>
<dbReference type="HOGENOM" id="CLU_078858_2_1_9"/>
<dbReference type="BioCyc" id="LDEL321956:LBUL_RS01670-MONOMER"/>
<dbReference type="GO" id="GO:0022625">
    <property type="term" value="C:cytosolic large ribosomal subunit"/>
    <property type="evidence" value="ECO:0007669"/>
    <property type="project" value="TreeGrafter"/>
</dbReference>
<dbReference type="GO" id="GO:0019843">
    <property type="term" value="F:rRNA binding"/>
    <property type="evidence" value="ECO:0007669"/>
    <property type="project" value="UniProtKB-UniRule"/>
</dbReference>
<dbReference type="GO" id="GO:0003735">
    <property type="term" value="F:structural constituent of ribosome"/>
    <property type="evidence" value="ECO:0007669"/>
    <property type="project" value="InterPro"/>
</dbReference>
<dbReference type="GO" id="GO:0000049">
    <property type="term" value="F:tRNA binding"/>
    <property type="evidence" value="ECO:0007669"/>
    <property type="project" value="UniProtKB-KW"/>
</dbReference>
<dbReference type="GO" id="GO:0006412">
    <property type="term" value="P:translation"/>
    <property type="evidence" value="ECO:0007669"/>
    <property type="project" value="UniProtKB-UniRule"/>
</dbReference>
<dbReference type="CDD" id="cd01433">
    <property type="entry name" value="Ribosomal_L16_L10e"/>
    <property type="match status" value="1"/>
</dbReference>
<dbReference type="FunFam" id="3.90.1170.10:FF:000001">
    <property type="entry name" value="50S ribosomal protein L16"/>
    <property type="match status" value="1"/>
</dbReference>
<dbReference type="Gene3D" id="3.90.1170.10">
    <property type="entry name" value="Ribosomal protein L10e/L16"/>
    <property type="match status" value="1"/>
</dbReference>
<dbReference type="HAMAP" id="MF_01342">
    <property type="entry name" value="Ribosomal_uL16"/>
    <property type="match status" value="1"/>
</dbReference>
<dbReference type="InterPro" id="IPR047873">
    <property type="entry name" value="Ribosomal_uL16"/>
</dbReference>
<dbReference type="InterPro" id="IPR000114">
    <property type="entry name" value="Ribosomal_uL16_bact-type"/>
</dbReference>
<dbReference type="InterPro" id="IPR020798">
    <property type="entry name" value="Ribosomal_uL16_CS"/>
</dbReference>
<dbReference type="InterPro" id="IPR016180">
    <property type="entry name" value="Ribosomal_uL16_dom"/>
</dbReference>
<dbReference type="InterPro" id="IPR036920">
    <property type="entry name" value="Ribosomal_uL16_sf"/>
</dbReference>
<dbReference type="NCBIfam" id="TIGR01164">
    <property type="entry name" value="rplP_bact"/>
    <property type="match status" value="1"/>
</dbReference>
<dbReference type="PANTHER" id="PTHR12220">
    <property type="entry name" value="50S/60S RIBOSOMAL PROTEIN L16"/>
    <property type="match status" value="1"/>
</dbReference>
<dbReference type="PANTHER" id="PTHR12220:SF13">
    <property type="entry name" value="LARGE RIBOSOMAL SUBUNIT PROTEIN UL16M"/>
    <property type="match status" value="1"/>
</dbReference>
<dbReference type="Pfam" id="PF00252">
    <property type="entry name" value="Ribosomal_L16"/>
    <property type="match status" value="1"/>
</dbReference>
<dbReference type="PRINTS" id="PR00060">
    <property type="entry name" value="RIBOSOMALL16"/>
</dbReference>
<dbReference type="SUPFAM" id="SSF54686">
    <property type="entry name" value="Ribosomal protein L16p/L10e"/>
    <property type="match status" value="1"/>
</dbReference>
<dbReference type="PROSITE" id="PS00586">
    <property type="entry name" value="RIBOSOMAL_L16_1"/>
    <property type="match status" value="1"/>
</dbReference>
<dbReference type="PROSITE" id="PS00701">
    <property type="entry name" value="RIBOSOMAL_L16_2"/>
    <property type="match status" value="1"/>
</dbReference>
<sequence length="147" mass="16323">MPLVPKRVKHRREFRGKMRGAAKGGKTVAFGEYGLEALESHWITNRQIEAARVAMTRYMKRGGKVWIRIFPQKSYTAKGVGVRMGSGKGAPAGWVAVVKREKIMFEIGGVSEETAREAMRLAASKLPIKCKFVKREDQEAGGATNED</sequence>
<name>RL16_LACDB</name>